<organism>
    <name type="scientific">Mycobacteroides abscessus (strain ATCC 19977 / DSM 44196 / CCUG 20993 / CIP 104536 / JCM 13569 / NCTC 13031 / TMC 1543 / L948)</name>
    <name type="common">Mycobacterium abscessus</name>
    <dbReference type="NCBI Taxonomy" id="561007"/>
    <lineage>
        <taxon>Bacteria</taxon>
        <taxon>Bacillati</taxon>
        <taxon>Actinomycetota</taxon>
        <taxon>Actinomycetes</taxon>
        <taxon>Mycobacteriales</taxon>
        <taxon>Mycobacteriaceae</taxon>
        <taxon>Mycobacteroides</taxon>
        <taxon>Mycobacteroides abscessus</taxon>
    </lineage>
</organism>
<sequence>MPKAKTHSGASKRFRTTGSGKIVRQKANRRHLLEHKPTSRTRRLDGRAVVAENDAKRVKKMLTG</sequence>
<accession>B1MAY2</accession>
<comment type="similarity">
    <text evidence="1">Belongs to the bacterial ribosomal protein bL35 family.</text>
</comment>
<gene>
    <name evidence="1" type="primary">rpmI</name>
    <name type="ordered locus">MAB_2322</name>
</gene>
<evidence type="ECO:0000255" key="1">
    <source>
        <dbReference type="HAMAP-Rule" id="MF_00514"/>
    </source>
</evidence>
<evidence type="ECO:0000256" key="2">
    <source>
        <dbReference type="SAM" id="MobiDB-lite"/>
    </source>
</evidence>
<evidence type="ECO:0000305" key="3"/>
<protein>
    <recommendedName>
        <fullName evidence="1">Large ribosomal subunit protein bL35</fullName>
    </recommendedName>
    <alternativeName>
        <fullName evidence="3">50S ribosomal protein L35</fullName>
    </alternativeName>
</protein>
<proteinExistence type="inferred from homology"/>
<feature type="chain" id="PRO_1000127379" description="Large ribosomal subunit protein bL35">
    <location>
        <begin position="1"/>
        <end position="64"/>
    </location>
</feature>
<feature type="region of interest" description="Disordered" evidence="2">
    <location>
        <begin position="1"/>
        <end position="47"/>
    </location>
</feature>
<feature type="compositionally biased region" description="Basic residues" evidence="2">
    <location>
        <begin position="1"/>
        <end position="15"/>
    </location>
</feature>
<feature type="compositionally biased region" description="Basic residues" evidence="2">
    <location>
        <begin position="23"/>
        <end position="33"/>
    </location>
</feature>
<feature type="compositionally biased region" description="Basic and acidic residues" evidence="2">
    <location>
        <begin position="34"/>
        <end position="46"/>
    </location>
</feature>
<keyword id="KW-1185">Reference proteome</keyword>
<keyword id="KW-0687">Ribonucleoprotein</keyword>
<keyword id="KW-0689">Ribosomal protein</keyword>
<reference key="1">
    <citation type="journal article" date="2009" name="PLoS ONE">
        <title>Non mycobacterial virulence genes in the genome of the emerging pathogen Mycobacterium abscessus.</title>
        <authorList>
            <person name="Ripoll F."/>
            <person name="Pasek S."/>
            <person name="Schenowitz C."/>
            <person name="Dossat C."/>
            <person name="Barbe V."/>
            <person name="Rottman M."/>
            <person name="Macheras E."/>
            <person name="Heym B."/>
            <person name="Herrmann J.L."/>
            <person name="Daffe M."/>
            <person name="Brosch R."/>
            <person name="Risler J.L."/>
            <person name="Gaillard J.L."/>
        </authorList>
    </citation>
    <scope>NUCLEOTIDE SEQUENCE [LARGE SCALE GENOMIC DNA]</scope>
    <source>
        <strain>ATCC 19977 / DSM 44196 / CCUG 20993 / CIP 104536 / JCM 13569 / NCTC 13031 / TMC 1543 / L948</strain>
    </source>
</reference>
<dbReference type="EMBL" id="CU458896">
    <property type="protein sequence ID" value="CAM62403.1"/>
    <property type="molecule type" value="Genomic_DNA"/>
</dbReference>
<dbReference type="RefSeq" id="WP_005058702.1">
    <property type="nucleotide sequence ID" value="NZ_MLCG01000006.1"/>
</dbReference>
<dbReference type="SMR" id="B1MAY2"/>
<dbReference type="GeneID" id="93379259"/>
<dbReference type="KEGG" id="mab:MAB_2322"/>
<dbReference type="Proteomes" id="UP000007137">
    <property type="component" value="Chromosome"/>
</dbReference>
<dbReference type="GO" id="GO:0022625">
    <property type="term" value="C:cytosolic large ribosomal subunit"/>
    <property type="evidence" value="ECO:0007669"/>
    <property type="project" value="TreeGrafter"/>
</dbReference>
<dbReference type="GO" id="GO:0003735">
    <property type="term" value="F:structural constituent of ribosome"/>
    <property type="evidence" value="ECO:0007669"/>
    <property type="project" value="InterPro"/>
</dbReference>
<dbReference type="GO" id="GO:0006412">
    <property type="term" value="P:translation"/>
    <property type="evidence" value="ECO:0007669"/>
    <property type="project" value="UniProtKB-UniRule"/>
</dbReference>
<dbReference type="FunFam" id="4.10.410.60:FF:000001">
    <property type="entry name" value="50S ribosomal protein L35"/>
    <property type="match status" value="1"/>
</dbReference>
<dbReference type="Gene3D" id="4.10.410.60">
    <property type="match status" value="1"/>
</dbReference>
<dbReference type="HAMAP" id="MF_00514">
    <property type="entry name" value="Ribosomal_bL35"/>
    <property type="match status" value="1"/>
</dbReference>
<dbReference type="InterPro" id="IPR001706">
    <property type="entry name" value="Ribosomal_bL35"/>
</dbReference>
<dbReference type="InterPro" id="IPR021137">
    <property type="entry name" value="Ribosomal_bL35-like"/>
</dbReference>
<dbReference type="InterPro" id="IPR018265">
    <property type="entry name" value="Ribosomal_bL35_CS"/>
</dbReference>
<dbReference type="InterPro" id="IPR037229">
    <property type="entry name" value="Ribosomal_bL35_sf"/>
</dbReference>
<dbReference type="NCBIfam" id="TIGR00001">
    <property type="entry name" value="rpmI_bact"/>
    <property type="match status" value="1"/>
</dbReference>
<dbReference type="PANTHER" id="PTHR33343">
    <property type="entry name" value="54S RIBOSOMAL PROTEIN BL35M"/>
    <property type="match status" value="1"/>
</dbReference>
<dbReference type="PANTHER" id="PTHR33343:SF1">
    <property type="entry name" value="LARGE RIBOSOMAL SUBUNIT PROTEIN BL35M"/>
    <property type="match status" value="1"/>
</dbReference>
<dbReference type="Pfam" id="PF01632">
    <property type="entry name" value="Ribosomal_L35p"/>
    <property type="match status" value="1"/>
</dbReference>
<dbReference type="PRINTS" id="PR00064">
    <property type="entry name" value="RIBOSOMALL35"/>
</dbReference>
<dbReference type="SUPFAM" id="SSF143034">
    <property type="entry name" value="L35p-like"/>
    <property type="match status" value="1"/>
</dbReference>
<dbReference type="PROSITE" id="PS00936">
    <property type="entry name" value="RIBOSOMAL_L35"/>
    <property type="match status" value="1"/>
</dbReference>
<name>RL35_MYCA9</name>